<proteinExistence type="evidence at protein level"/>
<evidence type="ECO:0000250" key="1"/>
<evidence type="ECO:0000305" key="2"/>
<accession>P34033</accession>
<organism>
    <name type="scientific">Cavia porcellus</name>
    <name type="common">Guinea pig</name>
    <dbReference type="NCBI Taxonomy" id="10141"/>
    <lineage>
        <taxon>Eukaryota</taxon>
        <taxon>Metazoa</taxon>
        <taxon>Chordata</taxon>
        <taxon>Craniata</taxon>
        <taxon>Vertebrata</taxon>
        <taxon>Euteleostomi</taxon>
        <taxon>Mammalia</taxon>
        <taxon>Eutheria</taxon>
        <taxon>Euarchontoglires</taxon>
        <taxon>Glires</taxon>
        <taxon>Rodentia</taxon>
        <taxon>Hystricomorpha</taxon>
        <taxon>Caviidae</taxon>
        <taxon>Cavia</taxon>
    </lineage>
</organism>
<protein>
    <recommendedName>
        <fullName>Cytochrome P450IIB</fullName>
        <ecNumber>1.14.14.1</ecNumber>
    </recommendedName>
</protein>
<reference key="1">
    <citation type="journal article" date="1990" name="Biochem. Biophys. Res. Commun.">
        <title>Purification of a cytochrome P450 isozyme belonging to a subfamily of P450 IIB from liver microsomes of guinea pigs.</title>
        <authorList>
            <person name="Narimatsu S."/>
            <person name="Akutsu Y."/>
            <person name="Matsunaga T."/>
            <person name="Watanabe K."/>
            <person name="Yamamoto I."/>
            <person name="Yoshimura H."/>
        </authorList>
    </citation>
    <scope>PROTEIN SEQUENCE</scope>
    <scope>CHARACTERIZATION</scope>
    <source>
        <strain>Hartley</strain>
        <tissue>Liver</tissue>
    </source>
</reference>
<comment type="function">
    <text>Cytochromes P450 are a group of heme-thiolate monooxygenases. In liver microsomes, this enzyme is involved in an NADPH-dependent electron transport pathway. This isozyme is active upon P.nitroanisole, aniline, D-benzphetamine, delta(9)-tetrahydrocannabinol (THC) and strychnine.</text>
</comment>
<comment type="catalytic activity">
    <reaction>
        <text>an organic molecule + reduced [NADPH--hemoprotein reductase] + O2 = an alcohol + oxidized [NADPH--hemoprotein reductase] + H2O + H(+)</text>
        <dbReference type="Rhea" id="RHEA:17149"/>
        <dbReference type="Rhea" id="RHEA-COMP:11964"/>
        <dbReference type="Rhea" id="RHEA-COMP:11965"/>
        <dbReference type="ChEBI" id="CHEBI:15377"/>
        <dbReference type="ChEBI" id="CHEBI:15378"/>
        <dbReference type="ChEBI" id="CHEBI:15379"/>
        <dbReference type="ChEBI" id="CHEBI:30879"/>
        <dbReference type="ChEBI" id="CHEBI:57618"/>
        <dbReference type="ChEBI" id="CHEBI:58210"/>
        <dbReference type="ChEBI" id="CHEBI:142491"/>
        <dbReference type="EC" id="1.14.14.1"/>
    </reaction>
</comment>
<comment type="cofactor">
    <cofactor evidence="1">
        <name>heme</name>
        <dbReference type="ChEBI" id="CHEBI:30413"/>
    </cofactor>
</comment>
<comment type="subcellular location">
    <subcellularLocation>
        <location>Endoplasmic reticulum membrane</location>
        <topology>Peripheral membrane protein</topology>
    </subcellularLocation>
    <subcellularLocation>
        <location>Microsome membrane</location>
        <topology>Peripheral membrane protein</topology>
    </subcellularLocation>
</comment>
<comment type="similarity">
    <text evidence="2">Belongs to the cytochrome P450 family.</text>
</comment>
<sequence length="20" mass="2259">MELSLLLFLALLLGLLLLLF</sequence>
<keyword id="KW-0903">Direct protein sequencing</keyword>
<keyword id="KW-0256">Endoplasmic reticulum</keyword>
<keyword id="KW-0349">Heme</keyword>
<keyword id="KW-0408">Iron</keyword>
<keyword id="KW-0472">Membrane</keyword>
<keyword id="KW-0479">Metal-binding</keyword>
<keyword id="KW-0492">Microsome</keyword>
<keyword id="KW-0503">Monooxygenase</keyword>
<keyword id="KW-0560">Oxidoreductase</keyword>
<keyword id="KW-1185">Reference proteome</keyword>
<feature type="chain" id="PRO_0000051691" description="Cytochrome P450IIB">
    <location>
        <begin position="1"/>
        <end position="20" status="greater than"/>
    </location>
</feature>
<feature type="non-terminal residue">
    <location>
        <position position="20"/>
    </location>
</feature>
<name>CP2BX_CAVPO</name>
<dbReference type="EC" id="1.14.14.1"/>
<dbReference type="HOGENOM" id="CLU_3429526_0_0_1"/>
<dbReference type="InParanoid" id="P34033"/>
<dbReference type="Proteomes" id="UP000005447">
    <property type="component" value="Unassembled WGS sequence"/>
</dbReference>
<dbReference type="GO" id="GO:0005789">
    <property type="term" value="C:endoplasmic reticulum membrane"/>
    <property type="evidence" value="ECO:0007669"/>
    <property type="project" value="UniProtKB-SubCell"/>
</dbReference>
<dbReference type="GO" id="GO:0046872">
    <property type="term" value="F:metal ion binding"/>
    <property type="evidence" value="ECO:0007669"/>
    <property type="project" value="UniProtKB-KW"/>
</dbReference>
<dbReference type="GO" id="GO:0016712">
    <property type="term" value="F:oxidoreductase activity, acting on paired donors, with incorporation or reduction of molecular oxygen, reduced flavin or flavoprotein as one donor, and incorporation of one atom of oxygen"/>
    <property type="evidence" value="ECO:0007669"/>
    <property type="project" value="UniProtKB-EC"/>
</dbReference>